<gene>
    <name evidence="3" type="primary">BLN03</name>
    <name type="ORF">CCR75_006621</name>
</gene>
<accession>A0A3F2YED3</accession>
<dbReference type="EMBL" id="MG686575">
    <property type="protein sequence ID" value="AYE92119.1"/>
    <property type="molecule type" value="mRNA"/>
</dbReference>
<dbReference type="EMBL" id="SHOA01000114">
    <property type="protein sequence ID" value="TDH67208.1"/>
    <property type="molecule type" value="Genomic_DNA"/>
</dbReference>
<dbReference type="VEuPathDB" id="FungiDB:CCR75_006621"/>
<dbReference type="GO" id="GO:0005576">
    <property type="term" value="C:extracellular region"/>
    <property type="evidence" value="ECO:0007669"/>
    <property type="project" value="UniProtKB-SubCell"/>
</dbReference>
<dbReference type="GO" id="GO:0033644">
    <property type="term" value="C:host cell membrane"/>
    <property type="evidence" value="ECO:0007669"/>
    <property type="project" value="UniProtKB-SubCell"/>
</dbReference>
<dbReference type="GO" id="GO:0016020">
    <property type="term" value="C:membrane"/>
    <property type="evidence" value="ECO:0007669"/>
    <property type="project" value="UniProtKB-KW"/>
</dbReference>
<protein>
    <recommendedName>
        <fullName evidence="3">Secreted RxLR effector protein BLN03</fullName>
    </recommendedName>
</protein>
<keyword id="KW-1043">Host membrane</keyword>
<keyword id="KW-0472">Membrane</keyword>
<keyword id="KW-0964">Secreted</keyword>
<keyword id="KW-0732">Signal</keyword>
<keyword id="KW-0812">Transmembrane</keyword>
<keyword id="KW-1133">Transmembrane helix</keyword>
<comment type="function">
    <text evidence="6">Secreted effector that inhibits stress-induced relocalization of the endoplasmic reticulum tail-anchored transcription factors to the nucleus, thus affecting stress responses.</text>
</comment>
<comment type="subunit">
    <text evidence="2">Interacts with host transcription factor NAC069.</text>
</comment>
<comment type="subcellular location">
    <subcellularLocation>
        <location evidence="2">Secreted</location>
    </subcellularLocation>
    <subcellularLocation>
        <location evidence="6">Host membrane</location>
        <topology evidence="1">Single-pass type I membrane protein</topology>
    </subcellularLocation>
</comment>
<comment type="domain">
    <text evidence="5">Has the canonical EER motif, but lacks the canonical translocation motif RxLR, which characterizes most oomycete effectors identified so far.</text>
</comment>
<comment type="similarity">
    <text evidence="4">Belongs to the RxLR effector family.</text>
</comment>
<sequence>MRPRKYIVVVLLSIAYTMCLAVGYPSDGTDDSTKSLKSGNRIRSHTPDIGTEERTLTWLKSMLRPSSSSAKVTKEIPEVVKSASDFKVRQTLSAITRKLGLHSQRLKRFASWLRKTGERLTRKKVYYAGYIAIVDSSSSQLKRLSVTYGSAFLFVIGFIVLLAFAMTAV</sequence>
<evidence type="ECO:0000255" key="1"/>
<evidence type="ECO:0000269" key="2">
    <source>
    </source>
</evidence>
<evidence type="ECO:0000303" key="3">
    <source>
    </source>
</evidence>
<evidence type="ECO:0000305" key="4"/>
<evidence type="ECO:0000305" key="5">
    <source>
    </source>
</evidence>
<evidence type="ECO:0000305" key="6">
    <source>
    </source>
</evidence>
<proteinExistence type="evidence at transcript level"/>
<reference key="1">
    <citation type="journal article" date="2019" name="Mol. Plant Pathol.">
        <title>Recognition of lettuce downy mildew effector BLR38 in Lactuca serriola LS102 requires two unlinked loci.</title>
        <authorList>
            <person name="Pelgrom A.J.E."/>
            <person name="Eikelhof J."/>
            <person name="Elberse J."/>
            <person name="Meisrimler C.N."/>
            <person name="Raedts R."/>
            <person name="Klein J."/>
            <person name="Van den Ackerveken G."/>
        </authorList>
    </citation>
    <scope>NUCLEOTIDE SEQUENCE [MRNA]</scope>
    <scope>DOMAIN</scope>
    <source>
        <strain>Race Bl:24</strain>
    </source>
</reference>
<reference key="2">
    <citation type="submission" date="2019-03" db="EMBL/GenBank/DDBJ databases">
        <title>Genomic signatures of somatic hybrid vigor due to heterokaryosis in the oomycete pathogen, Bremia lactucae.</title>
        <authorList>
            <person name="Fletcher K."/>
        </authorList>
    </citation>
    <scope>NUCLEOTIDE SEQUENCE [LARGE SCALE GENOMIC DNA]</scope>
    <source>
        <strain>SF5</strain>
    </source>
</reference>
<reference key="3">
    <citation type="journal article" date="2019" name="Plant J.">
        <title>Multiple downy mildew effectors target the stress-related NAC transcription factor LsNAC069 in lettuce.</title>
        <authorList>
            <person name="Meisrimler C.N."/>
            <person name="Pelgrom A.J.E."/>
            <person name="Oud B."/>
            <person name="Out S."/>
            <person name="Van den Ackerveken G."/>
        </authorList>
    </citation>
    <scope>FUNCTION</scope>
</reference>
<organism>
    <name type="scientific">Bremia lactucae</name>
    <name type="common">Lettuce downy mildew</name>
    <dbReference type="NCBI Taxonomy" id="4779"/>
    <lineage>
        <taxon>Eukaryota</taxon>
        <taxon>Sar</taxon>
        <taxon>Stramenopiles</taxon>
        <taxon>Oomycota</taxon>
        <taxon>Peronosporales</taxon>
        <taxon>Peronosporaceae</taxon>
        <taxon>Bremia</taxon>
    </lineage>
</organism>
<feature type="signal peptide" evidence="1">
    <location>
        <begin position="1"/>
        <end position="21"/>
    </location>
</feature>
<feature type="chain" id="PRO_0000447897" description="Secreted RxLR effector protein BLN03">
    <location>
        <begin position="22"/>
        <end position="169"/>
    </location>
</feature>
<feature type="transmembrane region" description="Helical" evidence="1">
    <location>
        <begin position="149"/>
        <end position="169"/>
    </location>
</feature>
<feature type="short sequence motif" description="dEER" evidence="5">
    <location>
        <begin position="51"/>
        <end position="54"/>
    </location>
</feature>
<name>BLN03_BRELC</name>